<proteinExistence type="inferred from homology"/>
<sequence length="413" mass="46576">MKIYLVGGAVRDALLGLPVKDKDWVVVGATPQEMLDAGYQQVGRDFPVFLHPQTHEEYALARTERKSGSGYTGFTCYAAPDVTLEADLQRRDLTINALARDDDGQIIDPYHGRRDLEARLLRHVSPAFGEDPLRVLRVARFAARYAHLSFRIADETLALMREMTAAGELEHLTPERVWKETENALTTRNPQVYFQVLRDCGALRVLFPEIDALFGVPAPAKWHPEIDTGVHTLMTLSMAAMLSPQLDVRFATLCHDLGKGLTPKNLWPRHHGHGPAGVKLVEQLCQRLRVPNDLRDLAKLVAEYHDLIHTFPILQPKTIVKLFDAIDAWRKPQRVEQIALTSEADVRGRTGFEASDYPQGRWLREAWQVAQAVPTKEVVEAGFKGIEIREELTKRRIAAVANWKEKRCPNPAS</sequence>
<evidence type="ECO:0000255" key="1">
    <source>
        <dbReference type="HAMAP-Rule" id="MF_01261"/>
    </source>
</evidence>
<keyword id="KW-0067">ATP-binding</keyword>
<keyword id="KW-0378">Hydrolase</keyword>
<keyword id="KW-0460">Magnesium</keyword>
<keyword id="KW-0479">Metal-binding</keyword>
<keyword id="KW-0511">Multifunctional enzyme</keyword>
<keyword id="KW-0533">Nickel</keyword>
<keyword id="KW-0547">Nucleotide-binding</keyword>
<keyword id="KW-0548">Nucleotidyltransferase</keyword>
<keyword id="KW-0692">RNA repair</keyword>
<keyword id="KW-0694">RNA-binding</keyword>
<keyword id="KW-0808">Transferase</keyword>
<keyword id="KW-0819">tRNA processing</keyword>
<organism>
    <name type="scientific">Salmonella heidelberg (strain SL476)</name>
    <dbReference type="NCBI Taxonomy" id="454169"/>
    <lineage>
        <taxon>Bacteria</taxon>
        <taxon>Pseudomonadati</taxon>
        <taxon>Pseudomonadota</taxon>
        <taxon>Gammaproteobacteria</taxon>
        <taxon>Enterobacterales</taxon>
        <taxon>Enterobacteriaceae</taxon>
        <taxon>Salmonella</taxon>
    </lineage>
</organism>
<dbReference type="EC" id="2.7.7.72" evidence="1"/>
<dbReference type="EC" id="3.1.3.-" evidence="1"/>
<dbReference type="EC" id="3.1.4.-" evidence="1"/>
<dbReference type="EMBL" id="CP001120">
    <property type="protein sequence ID" value="ACF67810.1"/>
    <property type="molecule type" value="Genomic_DNA"/>
</dbReference>
<dbReference type="RefSeq" id="WP_000708447.1">
    <property type="nucleotide sequence ID" value="NC_011083.1"/>
</dbReference>
<dbReference type="SMR" id="B4TI55"/>
<dbReference type="KEGG" id="seh:SeHA_C3458"/>
<dbReference type="HOGENOM" id="CLU_015961_1_1_6"/>
<dbReference type="Proteomes" id="UP000001866">
    <property type="component" value="Chromosome"/>
</dbReference>
<dbReference type="GO" id="GO:0005524">
    <property type="term" value="F:ATP binding"/>
    <property type="evidence" value="ECO:0007669"/>
    <property type="project" value="UniProtKB-UniRule"/>
</dbReference>
<dbReference type="GO" id="GO:0004810">
    <property type="term" value="F:CCA tRNA nucleotidyltransferase activity"/>
    <property type="evidence" value="ECO:0007669"/>
    <property type="project" value="UniProtKB-UniRule"/>
</dbReference>
<dbReference type="GO" id="GO:0004112">
    <property type="term" value="F:cyclic-nucleotide phosphodiesterase activity"/>
    <property type="evidence" value="ECO:0007669"/>
    <property type="project" value="UniProtKB-UniRule"/>
</dbReference>
<dbReference type="GO" id="GO:0000287">
    <property type="term" value="F:magnesium ion binding"/>
    <property type="evidence" value="ECO:0007669"/>
    <property type="project" value="UniProtKB-UniRule"/>
</dbReference>
<dbReference type="GO" id="GO:0016791">
    <property type="term" value="F:phosphatase activity"/>
    <property type="evidence" value="ECO:0007669"/>
    <property type="project" value="UniProtKB-UniRule"/>
</dbReference>
<dbReference type="GO" id="GO:0000049">
    <property type="term" value="F:tRNA binding"/>
    <property type="evidence" value="ECO:0007669"/>
    <property type="project" value="UniProtKB-UniRule"/>
</dbReference>
<dbReference type="GO" id="GO:0042245">
    <property type="term" value="P:RNA repair"/>
    <property type="evidence" value="ECO:0007669"/>
    <property type="project" value="UniProtKB-KW"/>
</dbReference>
<dbReference type="GO" id="GO:0001680">
    <property type="term" value="P:tRNA 3'-terminal CCA addition"/>
    <property type="evidence" value="ECO:0007669"/>
    <property type="project" value="UniProtKB-UniRule"/>
</dbReference>
<dbReference type="CDD" id="cd00077">
    <property type="entry name" value="HDc"/>
    <property type="match status" value="1"/>
</dbReference>
<dbReference type="CDD" id="cd05398">
    <property type="entry name" value="NT_ClassII-CCAase"/>
    <property type="match status" value="1"/>
</dbReference>
<dbReference type="FunFam" id="1.10.3090.10:FF:000001">
    <property type="entry name" value="Multifunctional CCA protein"/>
    <property type="match status" value="1"/>
</dbReference>
<dbReference type="FunFam" id="3.30.460.10:FF:000016">
    <property type="entry name" value="Multifunctional CCA protein"/>
    <property type="match status" value="1"/>
</dbReference>
<dbReference type="Gene3D" id="3.30.460.10">
    <property type="entry name" value="Beta Polymerase, domain 2"/>
    <property type="match status" value="1"/>
</dbReference>
<dbReference type="Gene3D" id="1.10.3090.10">
    <property type="entry name" value="cca-adding enzyme, domain 2"/>
    <property type="match status" value="1"/>
</dbReference>
<dbReference type="HAMAP" id="MF_01261">
    <property type="entry name" value="CCA_bact_type1"/>
    <property type="match status" value="1"/>
</dbReference>
<dbReference type="HAMAP" id="MF_01262">
    <property type="entry name" value="CCA_bact_type2"/>
    <property type="match status" value="1"/>
</dbReference>
<dbReference type="InterPro" id="IPR012006">
    <property type="entry name" value="CCA_bact"/>
</dbReference>
<dbReference type="InterPro" id="IPR003607">
    <property type="entry name" value="HD/PDEase_dom"/>
</dbReference>
<dbReference type="InterPro" id="IPR006674">
    <property type="entry name" value="HD_domain"/>
</dbReference>
<dbReference type="InterPro" id="IPR043519">
    <property type="entry name" value="NT_sf"/>
</dbReference>
<dbReference type="InterPro" id="IPR002646">
    <property type="entry name" value="PolA_pol_head_dom"/>
</dbReference>
<dbReference type="InterPro" id="IPR032828">
    <property type="entry name" value="PolyA_RNA-bd"/>
</dbReference>
<dbReference type="InterPro" id="IPR050124">
    <property type="entry name" value="tRNA_CCA-adding_enzyme"/>
</dbReference>
<dbReference type="NCBIfam" id="NF008137">
    <property type="entry name" value="PRK10885.1"/>
    <property type="match status" value="1"/>
</dbReference>
<dbReference type="PANTHER" id="PTHR47545">
    <property type="entry name" value="MULTIFUNCTIONAL CCA PROTEIN"/>
    <property type="match status" value="1"/>
</dbReference>
<dbReference type="PANTHER" id="PTHR47545:SF1">
    <property type="entry name" value="MULTIFUNCTIONAL CCA PROTEIN"/>
    <property type="match status" value="1"/>
</dbReference>
<dbReference type="Pfam" id="PF01966">
    <property type="entry name" value="HD"/>
    <property type="match status" value="1"/>
</dbReference>
<dbReference type="Pfam" id="PF01743">
    <property type="entry name" value="PolyA_pol"/>
    <property type="match status" value="1"/>
</dbReference>
<dbReference type="Pfam" id="PF12627">
    <property type="entry name" value="PolyA_pol_RNAbd"/>
    <property type="match status" value="1"/>
</dbReference>
<dbReference type="PIRSF" id="PIRSF000813">
    <property type="entry name" value="CCA_bact"/>
    <property type="match status" value="1"/>
</dbReference>
<dbReference type="SMART" id="SM00471">
    <property type="entry name" value="HDc"/>
    <property type="match status" value="1"/>
</dbReference>
<dbReference type="SUPFAM" id="SSF81301">
    <property type="entry name" value="Nucleotidyltransferase"/>
    <property type="match status" value="1"/>
</dbReference>
<dbReference type="SUPFAM" id="SSF81891">
    <property type="entry name" value="Poly A polymerase C-terminal region-like"/>
    <property type="match status" value="1"/>
</dbReference>
<dbReference type="PROSITE" id="PS51831">
    <property type="entry name" value="HD"/>
    <property type="match status" value="1"/>
</dbReference>
<protein>
    <recommendedName>
        <fullName evidence="1">Multifunctional CCA protein</fullName>
    </recommendedName>
    <domain>
        <recommendedName>
            <fullName evidence="1">CCA-adding enzyme</fullName>
            <ecNumber evidence="1">2.7.7.72</ecNumber>
        </recommendedName>
        <alternativeName>
            <fullName evidence="1">CCA tRNA nucleotidyltransferase</fullName>
        </alternativeName>
        <alternativeName>
            <fullName evidence="1">tRNA CCA-pyrophosphorylase</fullName>
        </alternativeName>
        <alternativeName>
            <fullName evidence="1">tRNA adenylyl-/cytidylyl-transferase</fullName>
        </alternativeName>
        <alternativeName>
            <fullName evidence="1">tRNA nucleotidyltransferase</fullName>
        </alternativeName>
        <alternativeName>
            <fullName evidence="1">tRNA-NT</fullName>
        </alternativeName>
    </domain>
    <domain>
        <recommendedName>
            <fullName evidence="1">2'-nucleotidase</fullName>
            <ecNumber evidence="1">3.1.3.-</ecNumber>
        </recommendedName>
    </domain>
    <domain>
        <recommendedName>
            <fullName evidence="1">2',3'-cyclic phosphodiesterase</fullName>
            <ecNumber evidence="1">3.1.4.-</ecNumber>
        </recommendedName>
    </domain>
    <domain>
        <recommendedName>
            <fullName evidence="1">Phosphatase</fullName>
            <ecNumber evidence="1">3.1.3.-</ecNumber>
        </recommendedName>
    </domain>
</protein>
<gene>
    <name evidence="1" type="primary">cca</name>
    <name type="ordered locus">SeHA_C3458</name>
</gene>
<name>CCA_SALHS</name>
<reference key="1">
    <citation type="journal article" date="2011" name="J. Bacteriol.">
        <title>Comparative genomics of 28 Salmonella enterica isolates: evidence for CRISPR-mediated adaptive sublineage evolution.</title>
        <authorList>
            <person name="Fricke W.F."/>
            <person name="Mammel M.K."/>
            <person name="McDermott P.F."/>
            <person name="Tartera C."/>
            <person name="White D.G."/>
            <person name="Leclerc J.E."/>
            <person name="Ravel J."/>
            <person name="Cebula T.A."/>
        </authorList>
    </citation>
    <scope>NUCLEOTIDE SEQUENCE [LARGE SCALE GENOMIC DNA]</scope>
    <source>
        <strain>SL476</strain>
    </source>
</reference>
<comment type="function">
    <text evidence="1">Catalyzes the addition and repair of the essential 3'-terminal CCA sequence in tRNAs without using a nucleic acid template. Adds these three nucleotides in the order of C, C, and A to the tRNA nucleotide-73, using CTP and ATP as substrates and producing inorganic pyrophosphate. tRNA 3'-terminal CCA addition is required both for tRNA processing and repair. Also involved in tRNA surveillance by mediating tandem CCA addition to generate a CCACCA at the 3' terminus of unstable tRNAs. While stable tRNAs receive only 3'-terminal CCA, unstable tRNAs are marked with CCACCA and rapidly degraded.</text>
</comment>
<comment type="catalytic activity">
    <reaction evidence="1">
        <text>a tRNA precursor + 2 CTP + ATP = a tRNA with a 3' CCA end + 3 diphosphate</text>
        <dbReference type="Rhea" id="RHEA:14433"/>
        <dbReference type="Rhea" id="RHEA-COMP:10465"/>
        <dbReference type="Rhea" id="RHEA-COMP:10468"/>
        <dbReference type="ChEBI" id="CHEBI:30616"/>
        <dbReference type="ChEBI" id="CHEBI:33019"/>
        <dbReference type="ChEBI" id="CHEBI:37563"/>
        <dbReference type="ChEBI" id="CHEBI:74896"/>
        <dbReference type="ChEBI" id="CHEBI:83071"/>
        <dbReference type="EC" id="2.7.7.72"/>
    </reaction>
</comment>
<comment type="catalytic activity">
    <reaction evidence="1">
        <text>a tRNA with a 3' CCA end + 2 CTP + ATP = a tRNA with a 3' CCACCA end + 3 diphosphate</text>
        <dbReference type="Rhea" id="RHEA:76235"/>
        <dbReference type="Rhea" id="RHEA-COMP:10468"/>
        <dbReference type="Rhea" id="RHEA-COMP:18655"/>
        <dbReference type="ChEBI" id="CHEBI:30616"/>
        <dbReference type="ChEBI" id="CHEBI:33019"/>
        <dbReference type="ChEBI" id="CHEBI:37563"/>
        <dbReference type="ChEBI" id="CHEBI:83071"/>
        <dbReference type="ChEBI" id="CHEBI:195187"/>
    </reaction>
    <physiologicalReaction direction="left-to-right" evidence="1">
        <dbReference type="Rhea" id="RHEA:76236"/>
    </physiologicalReaction>
</comment>
<comment type="cofactor">
    <cofactor evidence="1">
        <name>Mg(2+)</name>
        <dbReference type="ChEBI" id="CHEBI:18420"/>
    </cofactor>
    <text evidence="1">Magnesium is required for nucleotidyltransferase activity.</text>
</comment>
<comment type="cofactor">
    <cofactor evidence="1">
        <name>Ni(2+)</name>
        <dbReference type="ChEBI" id="CHEBI:49786"/>
    </cofactor>
    <text evidence="1">Nickel for phosphatase activity.</text>
</comment>
<comment type="subunit">
    <text evidence="1">Monomer. Can also form homodimers and oligomers.</text>
</comment>
<comment type="domain">
    <text evidence="1">Comprises two domains: an N-terminal domain containing the nucleotidyltransferase activity and a C-terminal HD domain associated with both phosphodiesterase and phosphatase activities.</text>
</comment>
<comment type="miscellaneous">
    <text evidence="1">A single active site specifically recognizes both ATP and CTP and is responsible for their addition.</text>
</comment>
<comment type="similarity">
    <text evidence="1">Belongs to the tRNA nucleotidyltransferase/poly(A) polymerase family. Bacterial CCA-adding enzyme type 1 subfamily.</text>
</comment>
<feature type="chain" id="PRO_1000140049" description="Multifunctional CCA protein">
    <location>
        <begin position="1"/>
        <end position="413"/>
    </location>
</feature>
<feature type="domain" description="HD" evidence="1">
    <location>
        <begin position="228"/>
        <end position="329"/>
    </location>
</feature>
<feature type="binding site" evidence="1">
    <location>
        <position position="8"/>
    </location>
    <ligand>
        <name>ATP</name>
        <dbReference type="ChEBI" id="CHEBI:30616"/>
    </ligand>
</feature>
<feature type="binding site" evidence="1">
    <location>
        <position position="8"/>
    </location>
    <ligand>
        <name>CTP</name>
        <dbReference type="ChEBI" id="CHEBI:37563"/>
    </ligand>
</feature>
<feature type="binding site" evidence="1">
    <location>
        <position position="11"/>
    </location>
    <ligand>
        <name>ATP</name>
        <dbReference type="ChEBI" id="CHEBI:30616"/>
    </ligand>
</feature>
<feature type="binding site" evidence="1">
    <location>
        <position position="11"/>
    </location>
    <ligand>
        <name>CTP</name>
        <dbReference type="ChEBI" id="CHEBI:37563"/>
    </ligand>
</feature>
<feature type="binding site" evidence="1">
    <location>
        <position position="21"/>
    </location>
    <ligand>
        <name>Mg(2+)</name>
        <dbReference type="ChEBI" id="CHEBI:18420"/>
    </ligand>
</feature>
<feature type="binding site" evidence="1">
    <location>
        <position position="23"/>
    </location>
    <ligand>
        <name>Mg(2+)</name>
        <dbReference type="ChEBI" id="CHEBI:18420"/>
    </ligand>
</feature>
<feature type="binding site" evidence="1">
    <location>
        <position position="91"/>
    </location>
    <ligand>
        <name>ATP</name>
        <dbReference type="ChEBI" id="CHEBI:30616"/>
    </ligand>
</feature>
<feature type="binding site" evidence="1">
    <location>
        <position position="91"/>
    </location>
    <ligand>
        <name>CTP</name>
        <dbReference type="ChEBI" id="CHEBI:37563"/>
    </ligand>
</feature>
<feature type="binding site" evidence="1">
    <location>
        <position position="137"/>
    </location>
    <ligand>
        <name>ATP</name>
        <dbReference type="ChEBI" id="CHEBI:30616"/>
    </ligand>
</feature>
<feature type="binding site" evidence="1">
    <location>
        <position position="137"/>
    </location>
    <ligand>
        <name>CTP</name>
        <dbReference type="ChEBI" id="CHEBI:37563"/>
    </ligand>
</feature>
<feature type="binding site" evidence="1">
    <location>
        <position position="140"/>
    </location>
    <ligand>
        <name>ATP</name>
        <dbReference type="ChEBI" id="CHEBI:30616"/>
    </ligand>
</feature>
<feature type="binding site" evidence="1">
    <location>
        <position position="140"/>
    </location>
    <ligand>
        <name>CTP</name>
        <dbReference type="ChEBI" id="CHEBI:37563"/>
    </ligand>
</feature>
<accession>B4TI55</accession>